<organism>
    <name type="scientific">Ginkgo biloba</name>
    <name type="common">Ginkgo</name>
    <name type="synonym">Maidenhair tree</name>
    <dbReference type="NCBI Taxonomy" id="3311"/>
    <lineage>
        <taxon>Eukaryota</taxon>
        <taxon>Viridiplantae</taxon>
        <taxon>Streptophyta</taxon>
        <taxon>Embryophyta</taxon>
        <taxon>Tracheophyta</taxon>
        <taxon>Spermatophyta</taxon>
        <taxon>Ginkgoidae</taxon>
        <taxon>Ginkgoales</taxon>
        <taxon>Ginkgoaceae</taxon>
        <taxon>Ginkgo</taxon>
    </lineage>
</organism>
<name>RR3_GINBI</name>
<sequence length="218" mass="25301">MGQRINPLGFRLGVTQNHRSHWFAQKKYYSEDLQEDEEIRNCIENYVRRHMKNYSNYGGIARVEIRRKIDLIQVEIHIGFPNLLIEDRGRGIEQLRTDVRNMLNSANRKLNISIAKVAKPYGVPNILAEYIALQLEDRVSFRKTVKKAIELAEQADIRGIQIQIAGRLDGNEIARVEWARGGRVPLQTIRARIDHCYYPAKTIYGVLGIKIWIFGDEE</sequence>
<geneLocation type="chloroplast"/>
<dbReference type="EMBL" id="DQ069458">
    <property type="protein sequence ID" value="AAZ03896.1"/>
    <property type="molecule type" value="Genomic_DNA"/>
</dbReference>
<dbReference type="RefSeq" id="YP_005352746.1">
    <property type="nucleotide sequence ID" value="NC_016986.1"/>
</dbReference>
<dbReference type="SMR" id="Q4FG73"/>
<dbReference type="GeneID" id="11935046"/>
<dbReference type="GO" id="GO:0009507">
    <property type="term" value="C:chloroplast"/>
    <property type="evidence" value="ECO:0007669"/>
    <property type="project" value="UniProtKB-SubCell"/>
</dbReference>
<dbReference type="GO" id="GO:0022627">
    <property type="term" value="C:cytosolic small ribosomal subunit"/>
    <property type="evidence" value="ECO:0007669"/>
    <property type="project" value="TreeGrafter"/>
</dbReference>
<dbReference type="GO" id="GO:0019843">
    <property type="term" value="F:rRNA binding"/>
    <property type="evidence" value="ECO:0007669"/>
    <property type="project" value="UniProtKB-UniRule"/>
</dbReference>
<dbReference type="GO" id="GO:0003735">
    <property type="term" value="F:structural constituent of ribosome"/>
    <property type="evidence" value="ECO:0007669"/>
    <property type="project" value="InterPro"/>
</dbReference>
<dbReference type="GO" id="GO:0006412">
    <property type="term" value="P:translation"/>
    <property type="evidence" value="ECO:0007669"/>
    <property type="project" value="UniProtKB-UniRule"/>
</dbReference>
<dbReference type="CDD" id="cd02412">
    <property type="entry name" value="KH-II_30S_S3"/>
    <property type="match status" value="1"/>
</dbReference>
<dbReference type="FunFam" id="3.30.1140.32:FF:000003">
    <property type="entry name" value="30S ribosomal protein S3, chloroplastic"/>
    <property type="match status" value="1"/>
</dbReference>
<dbReference type="Gene3D" id="3.30.300.20">
    <property type="match status" value="1"/>
</dbReference>
<dbReference type="Gene3D" id="3.30.1140.32">
    <property type="entry name" value="Ribosomal protein S3, C-terminal domain"/>
    <property type="match status" value="1"/>
</dbReference>
<dbReference type="HAMAP" id="MF_01309_B">
    <property type="entry name" value="Ribosomal_uS3_B"/>
    <property type="match status" value="1"/>
</dbReference>
<dbReference type="InterPro" id="IPR015946">
    <property type="entry name" value="KH_dom-like_a/b"/>
</dbReference>
<dbReference type="InterPro" id="IPR004044">
    <property type="entry name" value="KH_dom_type_2"/>
</dbReference>
<dbReference type="InterPro" id="IPR009019">
    <property type="entry name" value="KH_sf_prok-type"/>
</dbReference>
<dbReference type="InterPro" id="IPR036419">
    <property type="entry name" value="Ribosomal_S3_C_sf"/>
</dbReference>
<dbReference type="InterPro" id="IPR005704">
    <property type="entry name" value="Ribosomal_uS3_bac-typ"/>
</dbReference>
<dbReference type="InterPro" id="IPR001351">
    <property type="entry name" value="Ribosomal_uS3_C"/>
</dbReference>
<dbReference type="InterPro" id="IPR018280">
    <property type="entry name" value="Ribosomal_uS3_CS"/>
</dbReference>
<dbReference type="NCBIfam" id="TIGR01009">
    <property type="entry name" value="rpsC_bact"/>
    <property type="match status" value="1"/>
</dbReference>
<dbReference type="PANTHER" id="PTHR11760">
    <property type="entry name" value="30S/40S RIBOSOMAL PROTEIN S3"/>
    <property type="match status" value="1"/>
</dbReference>
<dbReference type="PANTHER" id="PTHR11760:SF19">
    <property type="entry name" value="SMALL RIBOSOMAL SUBUNIT PROTEIN US3C"/>
    <property type="match status" value="1"/>
</dbReference>
<dbReference type="Pfam" id="PF00189">
    <property type="entry name" value="Ribosomal_S3_C"/>
    <property type="match status" value="1"/>
</dbReference>
<dbReference type="SUPFAM" id="SSF54814">
    <property type="entry name" value="Prokaryotic type KH domain (KH-domain type II)"/>
    <property type="match status" value="1"/>
</dbReference>
<dbReference type="SUPFAM" id="SSF54821">
    <property type="entry name" value="Ribosomal protein S3 C-terminal domain"/>
    <property type="match status" value="1"/>
</dbReference>
<dbReference type="PROSITE" id="PS50823">
    <property type="entry name" value="KH_TYPE_2"/>
    <property type="match status" value="1"/>
</dbReference>
<dbReference type="PROSITE" id="PS00548">
    <property type="entry name" value="RIBOSOMAL_S3"/>
    <property type="match status" value="1"/>
</dbReference>
<feature type="chain" id="PRO_0000293943" description="Small ribosomal subunit protein uS3c">
    <location>
        <begin position="1"/>
        <end position="218"/>
    </location>
</feature>
<feature type="domain" description="KH type-2">
    <location>
        <begin position="47"/>
        <end position="118"/>
    </location>
</feature>
<accession>Q4FG73</accession>
<protein>
    <recommendedName>
        <fullName evidence="2">Small ribosomal subunit protein uS3c</fullName>
    </recommendedName>
    <alternativeName>
        <fullName>30S ribosomal protein S3, chloroplastic</fullName>
    </alternativeName>
</protein>
<comment type="subunit">
    <text evidence="1">Part of the 30S ribosomal subunit.</text>
</comment>
<comment type="subcellular location">
    <subcellularLocation>
        <location>Plastid</location>
        <location>Chloroplast</location>
    </subcellularLocation>
</comment>
<comment type="similarity">
    <text evidence="2">Belongs to the universal ribosomal protein uS3 family.</text>
</comment>
<reference key="1">
    <citation type="journal article" date="2005" name="Mol. Biol. Evol.">
        <title>Identifying the basal angiosperm node in chloroplast genome phylogenies: sampling one's way out of the Felsenstein zone.</title>
        <authorList>
            <person name="Leebens-Mack J."/>
            <person name="Raubeson L.A."/>
            <person name="Cui L."/>
            <person name="Kuehl J.V."/>
            <person name="Fourcade M.H."/>
            <person name="Chumley T.W."/>
            <person name="Boore J.L."/>
            <person name="Jansen R.K."/>
            <person name="dePamphilis C.W."/>
        </authorList>
    </citation>
    <scope>NUCLEOTIDE SEQUENCE [GENOMIC DNA]</scope>
</reference>
<evidence type="ECO:0000250" key="1"/>
<evidence type="ECO:0000305" key="2"/>
<gene>
    <name type="primary">rps3</name>
</gene>
<proteinExistence type="inferred from homology"/>
<keyword id="KW-0150">Chloroplast</keyword>
<keyword id="KW-0934">Plastid</keyword>
<keyword id="KW-0687">Ribonucleoprotein</keyword>
<keyword id="KW-0689">Ribosomal protein</keyword>
<keyword id="KW-0694">RNA-binding</keyword>
<keyword id="KW-0699">rRNA-binding</keyword>